<proteinExistence type="inferred from homology"/>
<evidence type="ECO:0000250" key="1"/>
<evidence type="ECO:0000255" key="2"/>
<evidence type="ECO:0000255" key="3">
    <source>
        <dbReference type="PROSITE-ProRule" id="PRU00659"/>
    </source>
</evidence>
<evidence type="ECO:0000256" key="4">
    <source>
        <dbReference type="SAM" id="MobiDB-lite"/>
    </source>
</evidence>
<evidence type="ECO:0000305" key="5"/>
<organism>
    <name type="scientific">Dictyostelium discoideum</name>
    <name type="common">Social amoeba</name>
    <dbReference type="NCBI Taxonomy" id="44689"/>
    <lineage>
        <taxon>Eukaryota</taxon>
        <taxon>Amoebozoa</taxon>
        <taxon>Evosea</taxon>
        <taxon>Eumycetozoa</taxon>
        <taxon>Dictyostelia</taxon>
        <taxon>Dictyosteliales</taxon>
        <taxon>Dictyosteliaceae</taxon>
        <taxon>Dictyostelium</taxon>
    </lineage>
</organism>
<protein>
    <recommendedName>
        <fullName>Tubulin-specific chaperone C</fullName>
    </recommendedName>
    <alternativeName>
        <fullName>Tubulin-folding cofactor C</fullName>
        <shortName>CFC</shortName>
    </alternativeName>
</protein>
<feature type="chain" id="PRO_0000337256" description="Tubulin-specific chaperone C">
    <location>
        <begin position="1"/>
        <end position="420"/>
    </location>
</feature>
<feature type="domain" description="C-CAP/cofactor C-like" evidence="3">
    <location>
        <begin position="216"/>
        <end position="366"/>
    </location>
</feature>
<feature type="region of interest" description="Disordered" evidence="4">
    <location>
        <begin position="31"/>
        <end position="52"/>
    </location>
</feature>
<feature type="region of interest" description="Disordered" evidence="4">
    <location>
        <begin position="138"/>
        <end position="193"/>
    </location>
</feature>
<feature type="region of interest" description="Disordered" evidence="4">
    <location>
        <begin position="222"/>
        <end position="257"/>
    </location>
</feature>
<feature type="coiled-coil region" evidence="2">
    <location>
        <begin position="9"/>
        <end position="142"/>
    </location>
</feature>
<feature type="compositionally biased region" description="Basic and acidic residues" evidence="4">
    <location>
        <begin position="31"/>
        <end position="49"/>
    </location>
</feature>
<feature type="compositionally biased region" description="Low complexity" evidence="4">
    <location>
        <begin position="172"/>
        <end position="192"/>
    </location>
</feature>
<feature type="compositionally biased region" description="Low complexity" evidence="4">
    <location>
        <begin position="228"/>
        <end position="257"/>
    </location>
</feature>
<accession>Q54PY1</accession>
<sequence>MSNNNNNNNNNNDEENSKLDIVKKQFQEKEKQRLQSKLEKREISNKEQIDQSSSNIASETLLLINNLSDDIENRLNEISNNTNENKAEDLKESYNQMEESLSEINSITTMSSHILTSYDVKSILENIDNLRKQIDKSKEKYMPKQKLSLTRKKTKTTTVSTKTTSSKEDTNETFNNNNNNNNDNDNTDNNNNKISTEPIFNLINIKGFKNKELFYPPKKEEEIGNQDINNNNNNNNNNNNNNNNNNNNNNNNNNNNNNSNSINDLFISDLTDCTVILDMKVLTALKINNLVNCKIRANSPIDGSIFIDNCINSIFSLVSRQIRIHYCTDCQFNIFVKSNPIIEGSKQIKFSSYLQNLKQQQQQQQQQEQEKVLSSFDNKRFKEYSFDLESNNIDSDKWKLVNDFDWIQQKQSPNWSLVEY</sequence>
<name>TBCC_DICDI</name>
<comment type="function">
    <text evidence="1">Tubulin-folding protein; involved in the final step of the tubulin folding pathway.</text>
</comment>
<comment type="subunit">
    <text evidence="1">Supercomplex made of cofactors A to E. Cofactors A and D function by capturing and stabilizing tubulin in a quasi-native conformation. Cofactor E binds to the cofactor D-tubulin complex; interaction with cofactor C then causes the release of tubulin polypeptides that are committed to the native state (By similarity).</text>
</comment>
<comment type="similarity">
    <text evidence="5">Belongs to the TBCC family.</text>
</comment>
<reference key="1">
    <citation type="journal article" date="2005" name="Nature">
        <title>The genome of the social amoeba Dictyostelium discoideum.</title>
        <authorList>
            <person name="Eichinger L."/>
            <person name="Pachebat J.A."/>
            <person name="Gloeckner G."/>
            <person name="Rajandream M.A."/>
            <person name="Sucgang R."/>
            <person name="Berriman M."/>
            <person name="Song J."/>
            <person name="Olsen R."/>
            <person name="Szafranski K."/>
            <person name="Xu Q."/>
            <person name="Tunggal B."/>
            <person name="Kummerfeld S."/>
            <person name="Madera M."/>
            <person name="Konfortov B.A."/>
            <person name="Rivero F."/>
            <person name="Bankier A.T."/>
            <person name="Lehmann R."/>
            <person name="Hamlin N."/>
            <person name="Davies R."/>
            <person name="Gaudet P."/>
            <person name="Fey P."/>
            <person name="Pilcher K."/>
            <person name="Chen G."/>
            <person name="Saunders D."/>
            <person name="Sodergren E.J."/>
            <person name="Davis P."/>
            <person name="Kerhornou A."/>
            <person name="Nie X."/>
            <person name="Hall N."/>
            <person name="Anjard C."/>
            <person name="Hemphill L."/>
            <person name="Bason N."/>
            <person name="Farbrother P."/>
            <person name="Desany B."/>
            <person name="Just E."/>
            <person name="Morio T."/>
            <person name="Rost R."/>
            <person name="Churcher C.M."/>
            <person name="Cooper J."/>
            <person name="Haydock S."/>
            <person name="van Driessche N."/>
            <person name="Cronin A."/>
            <person name="Goodhead I."/>
            <person name="Muzny D.M."/>
            <person name="Mourier T."/>
            <person name="Pain A."/>
            <person name="Lu M."/>
            <person name="Harper D."/>
            <person name="Lindsay R."/>
            <person name="Hauser H."/>
            <person name="James K.D."/>
            <person name="Quiles M."/>
            <person name="Madan Babu M."/>
            <person name="Saito T."/>
            <person name="Buchrieser C."/>
            <person name="Wardroper A."/>
            <person name="Felder M."/>
            <person name="Thangavelu M."/>
            <person name="Johnson D."/>
            <person name="Knights A."/>
            <person name="Loulseged H."/>
            <person name="Mungall K.L."/>
            <person name="Oliver K."/>
            <person name="Price C."/>
            <person name="Quail M.A."/>
            <person name="Urushihara H."/>
            <person name="Hernandez J."/>
            <person name="Rabbinowitsch E."/>
            <person name="Steffen D."/>
            <person name="Sanders M."/>
            <person name="Ma J."/>
            <person name="Kohara Y."/>
            <person name="Sharp S."/>
            <person name="Simmonds M.N."/>
            <person name="Spiegler S."/>
            <person name="Tivey A."/>
            <person name="Sugano S."/>
            <person name="White B."/>
            <person name="Walker D."/>
            <person name="Woodward J.R."/>
            <person name="Winckler T."/>
            <person name="Tanaka Y."/>
            <person name="Shaulsky G."/>
            <person name="Schleicher M."/>
            <person name="Weinstock G.M."/>
            <person name="Rosenthal A."/>
            <person name="Cox E.C."/>
            <person name="Chisholm R.L."/>
            <person name="Gibbs R.A."/>
            <person name="Loomis W.F."/>
            <person name="Platzer M."/>
            <person name="Kay R.R."/>
            <person name="Williams J.G."/>
            <person name="Dear P.H."/>
            <person name="Noegel A.A."/>
            <person name="Barrell B.G."/>
            <person name="Kuspa A."/>
        </authorList>
    </citation>
    <scope>NUCLEOTIDE SEQUENCE [LARGE SCALE GENOMIC DNA]</scope>
    <source>
        <strain>AX4</strain>
    </source>
</reference>
<keyword id="KW-0175">Coiled coil</keyword>
<keyword id="KW-1185">Reference proteome</keyword>
<dbReference type="EMBL" id="AAFI02000064">
    <property type="protein sequence ID" value="EAL65345.1"/>
    <property type="molecule type" value="Genomic_DNA"/>
</dbReference>
<dbReference type="RefSeq" id="XP_638664.1">
    <property type="nucleotide sequence ID" value="XM_633572.1"/>
</dbReference>
<dbReference type="SMR" id="Q54PY1"/>
<dbReference type="FunCoup" id="Q54PY1">
    <property type="interactions" value="112"/>
</dbReference>
<dbReference type="STRING" id="44689.Q54PY1"/>
<dbReference type="PaxDb" id="44689-DDB0266636"/>
<dbReference type="EnsemblProtists" id="EAL65345">
    <property type="protein sequence ID" value="EAL65345"/>
    <property type="gene ID" value="DDB_G0284313"/>
</dbReference>
<dbReference type="GeneID" id="8624493"/>
<dbReference type="KEGG" id="ddi:DDB_G0284313"/>
<dbReference type="dictyBase" id="DDB_G0284313">
    <property type="gene designation" value="tbcC"/>
</dbReference>
<dbReference type="VEuPathDB" id="AmoebaDB:DDB_G0284313"/>
<dbReference type="eggNOG" id="KOG2512">
    <property type="taxonomic scope" value="Eukaryota"/>
</dbReference>
<dbReference type="HOGENOM" id="CLU_654579_0_0_1"/>
<dbReference type="InParanoid" id="Q54PY1"/>
<dbReference type="OMA" id="QFNIFVK"/>
<dbReference type="PhylomeDB" id="Q54PY1"/>
<dbReference type="PRO" id="PR:Q54PY1"/>
<dbReference type="Proteomes" id="UP000002195">
    <property type="component" value="Chromosome 4"/>
</dbReference>
<dbReference type="GO" id="GO:0005737">
    <property type="term" value="C:cytoplasm"/>
    <property type="evidence" value="ECO:0000318"/>
    <property type="project" value="GO_Central"/>
</dbReference>
<dbReference type="GO" id="GO:0015631">
    <property type="term" value="F:tubulin binding"/>
    <property type="evidence" value="ECO:0007669"/>
    <property type="project" value="InterPro"/>
</dbReference>
<dbReference type="GO" id="GO:0007023">
    <property type="term" value="P:post-chaperonin tubulin folding pathway"/>
    <property type="evidence" value="ECO:0007669"/>
    <property type="project" value="InterPro"/>
</dbReference>
<dbReference type="GO" id="GO:0006457">
    <property type="term" value="P:protein folding"/>
    <property type="evidence" value="ECO:0000318"/>
    <property type="project" value="GO_Central"/>
</dbReference>
<dbReference type="GO" id="GO:0007021">
    <property type="term" value="P:tubulin complex assembly"/>
    <property type="evidence" value="ECO:0000318"/>
    <property type="project" value="GO_Central"/>
</dbReference>
<dbReference type="FunFam" id="2.160.20.70:FF:000036">
    <property type="entry name" value="Tubulin-specific chaperone C"/>
    <property type="match status" value="1"/>
</dbReference>
<dbReference type="Gene3D" id="2.160.20.70">
    <property type="match status" value="1"/>
</dbReference>
<dbReference type="InterPro" id="IPR017901">
    <property type="entry name" value="C-CAP_CF_C-like"/>
</dbReference>
<dbReference type="InterPro" id="IPR016098">
    <property type="entry name" value="CAP/MinC_C"/>
</dbReference>
<dbReference type="InterPro" id="IPR027684">
    <property type="entry name" value="TBCC"/>
</dbReference>
<dbReference type="InterPro" id="IPR031925">
    <property type="entry name" value="TBCC_N"/>
</dbReference>
<dbReference type="InterPro" id="IPR012945">
    <property type="entry name" value="Tubulin-bd_cofactor_C_dom"/>
</dbReference>
<dbReference type="PANTHER" id="PTHR15139">
    <property type="entry name" value="TUBULIN FOLDING COFACTOR C"/>
    <property type="match status" value="1"/>
</dbReference>
<dbReference type="PANTHER" id="PTHR15139:SF0">
    <property type="entry name" value="TUBULIN-SPECIFIC CHAPERONE C"/>
    <property type="match status" value="1"/>
</dbReference>
<dbReference type="Pfam" id="PF07986">
    <property type="entry name" value="TBCC"/>
    <property type="match status" value="1"/>
</dbReference>
<dbReference type="Pfam" id="PF16752">
    <property type="entry name" value="TBCC_N"/>
    <property type="match status" value="1"/>
</dbReference>
<dbReference type="PROSITE" id="PS51329">
    <property type="entry name" value="C_CAP_COFACTOR_C"/>
    <property type="match status" value="1"/>
</dbReference>
<gene>
    <name type="primary">tbcc</name>
    <name type="ORF">DDB_G0284313</name>
</gene>